<organism>
    <name type="scientific">Thermotoga sp. (strain RQ2)</name>
    <dbReference type="NCBI Taxonomy" id="126740"/>
    <lineage>
        <taxon>Bacteria</taxon>
        <taxon>Thermotogati</taxon>
        <taxon>Thermotogota</taxon>
        <taxon>Thermotogae</taxon>
        <taxon>Thermotogales</taxon>
        <taxon>Thermotogaceae</taxon>
        <taxon>Thermotoga</taxon>
    </lineage>
</organism>
<proteinExistence type="inferred from homology"/>
<dbReference type="EMBL" id="CP000969">
    <property type="protein sequence ID" value="ACB08767.1"/>
    <property type="molecule type" value="Genomic_DNA"/>
</dbReference>
<dbReference type="RefSeq" id="WP_012310528.1">
    <property type="nucleotide sequence ID" value="NC_010483.1"/>
</dbReference>
<dbReference type="SMR" id="B1L8W9"/>
<dbReference type="KEGG" id="trq:TRQ2_0411"/>
<dbReference type="HOGENOM" id="CLU_113688_0_2_0"/>
<dbReference type="Proteomes" id="UP000001687">
    <property type="component" value="Chromosome"/>
</dbReference>
<dbReference type="GO" id="GO:0005829">
    <property type="term" value="C:cytosol"/>
    <property type="evidence" value="ECO:0007669"/>
    <property type="project" value="TreeGrafter"/>
</dbReference>
<dbReference type="GO" id="GO:0003723">
    <property type="term" value="F:RNA binding"/>
    <property type="evidence" value="ECO:0007669"/>
    <property type="project" value="UniProtKB-UniRule"/>
</dbReference>
<dbReference type="GO" id="GO:0006355">
    <property type="term" value="P:regulation of DNA-templated transcription"/>
    <property type="evidence" value="ECO:0007669"/>
    <property type="project" value="InterPro"/>
</dbReference>
<dbReference type="GO" id="GO:0043487">
    <property type="term" value="P:regulation of RNA stability"/>
    <property type="evidence" value="ECO:0007669"/>
    <property type="project" value="TreeGrafter"/>
</dbReference>
<dbReference type="GO" id="GO:0045974">
    <property type="term" value="P:regulation of translation, ncRNA-mediated"/>
    <property type="evidence" value="ECO:0007669"/>
    <property type="project" value="TreeGrafter"/>
</dbReference>
<dbReference type="CDD" id="cd01716">
    <property type="entry name" value="Hfq"/>
    <property type="match status" value="1"/>
</dbReference>
<dbReference type="FunFam" id="2.30.30.100:FF:000012">
    <property type="entry name" value="RNA-binding protein Hfq"/>
    <property type="match status" value="1"/>
</dbReference>
<dbReference type="Gene3D" id="2.30.30.100">
    <property type="match status" value="1"/>
</dbReference>
<dbReference type="HAMAP" id="MF_00436">
    <property type="entry name" value="Hfq"/>
    <property type="match status" value="1"/>
</dbReference>
<dbReference type="InterPro" id="IPR005001">
    <property type="entry name" value="Hfq"/>
</dbReference>
<dbReference type="InterPro" id="IPR010920">
    <property type="entry name" value="LSM_dom_sf"/>
</dbReference>
<dbReference type="InterPro" id="IPR047575">
    <property type="entry name" value="Sm"/>
</dbReference>
<dbReference type="NCBIfam" id="TIGR02383">
    <property type="entry name" value="Hfq"/>
    <property type="match status" value="1"/>
</dbReference>
<dbReference type="NCBIfam" id="NF001602">
    <property type="entry name" value="PRK00395.1"/>
    <property type="match status" value="1"/>
</dbReference>
<dbReference type="PANTHER" id="PTHR34772">
    <property type="entry name" value="RNA-BINDING PROTEIN HFQ"/>
    <property type="match status" value="1"/>
</dbReference>
<dbReference type="PANTHER" id="PTHR34772:SF1">
    <property type="entry name" value="RNA-BINDING PROTEIN HFQ"/>
    <property type="match status" value="1"/>
</dbReference>
<dbReference type="Pfam" id="PF17209">
    <property type="entry name" value="Hfq"/>
    <property type="match status" value="1"/>
</dbReference>
<dbReference type="SUPFAM" id="SSF50182">
    <property type="entry name" value="Sm-like ribonucleoproteins"/>
    <property type="match status" value="1"/>
</dbReference>
<dbReference type="PROSITE" id="PS52002">
    <property type="entry name" value="SM"/>
    <property type="match status" value="1"/>
</dbReference>
<keyword id="KW-0694">RNA-binding</keyword>
<keyword id="KW-0346">Stress response</keyword>
<protein>
    <recommendedName>
        <fullName evidence="1">RNA-binding protein Hfq</fullName>
    </recommendedName>
</protein>
<comment type="function">
    <text evidence="1">RNA chaperone that binds small regulatory RNA (sRNAs) and mRNAs to facilitate mRNA translational regulation in response to envelope stress, environmental stress and changes in metabolite concentrations. Also binds with high specificity to tRNAs.</text>
</comment>
<comment type="subunit">
    <text evidence="1">Homohexamer.</text>
</comment>
<comment type="similarity">
    <text evidence="1">Belongs to the Hfq family.</text>
</comment>
<reference key="1">
    <citation type="journal article" date="2011" name="J. Bacteriol.">
        <title>Genome sequence of Thermotoga sp. strain RQ2, a hyperthermophilic bacterium isolated from a geothermally heated region of the seafloor near Ribeira Quente, the Azores.</title>
        <authorList>
            <person name="Swithers K.S."/>
            <person name="DiPippo J.L."/>
            <person name="Bruce D.C."/>
            <person name="Detter C."/>
            <person name="Tapia R."/>
            <person name="Han S."/>
            <person name="Saunders E."/>
            <person name="Goodwin L.A."/>
            <person name="Han J."/>
            <person name="Woyke T."/>
            <person name="Pitluck S."/>
            <person name="Pennacchio L."/>
            <person name="Nolan M."/>
            <person name="Mikhailova N."/>
            <person name="Lykidis A."/>
            <person name="Land M.L."/>
            <person name="Brettin T."/>
            <person name="Stetter K.O."/>
            <person name="Nelson K.E."/>
            <person name="Gogarten J.P."/>
            <person name="Noll K.M."/>
        </authorList>
    </citation>
    <scope>NUCLEOTIDE SEQUENCE [LARGE SCALE GENOMIC DNA]</scope>
    <source>
        <strain>RQ2</strain>
    </source>
</reference>
<feature type="chain" id="PRO_1000190367" description="RNA-binding protein Hfq">
    <location>
        <begin position="1"/>
        <end position="90"/>
    </location>
</feature>
<feature type="domain" description="Sm" evidence="2">
    <location>
        <begin position="9"/>
        <end position="69"/>
    </location>
</feature>
<evidence type="ECO:0000255" key="1">
    <source>
        <dbReference type="HAMAP-Rule" id="MF_00436"/>
    </source>
</evidence>
<evidence type="ECO:0000255" key="2">
    <source>
        <dbReference type="PROSITE-ProRule" id="PRU01346"/>
    </source>
</evidence>
<name>HFQ_THESQ</name>
<accession>B1L8W9</accession>
<gene>
    <name evidence="1" type="primary">hfq</name>
    <name type="ordered locus">TRQ2_0411</name>
</gene>
<sequence>MAEKFNLQDRFLNHLRVNKIEVKVYLVNGFQTKGFIRSFDSYTVLLESGNQQSLIYKHAISTIIPSSYVMLMPRKQEPEKEDETPEDQGS</sequence>